<name>LEU1_LYSSC</name>
<sequence>MRKIDIFDTTLRDGEQSAGINLNTAEKIEIAKQLERLGVTIIEAGFPASSPGDFDAVHRIAETVKNSVVTGLARCIQKDIDTTWEAIKGAQQPHIHIFLATSPIHMEYKLKKSPEQVIEQAVEAVKYAKKYFPLVQWSAEDAFRSDREFLVRIMNEVVTAGATTINVPDTVGYASPYEYGALFKYLLENVKGADKVKFSAHCHDDLGMATANTLAAIENGAAQVEGTINGIGERAGNVALEEIAVALHIRKDYYQVETGIQLQEIKRTSQLVSKLTNVVIQPNKAIVGRNAFAHESGIHQDGVLKNPETYEIISPALIGEGEIPLVLGKHSGRAAFRDRAETLGFDLSDEKLNKAFVEFKKLADRKKEITEEDLLTLLTEQQIQLEDVPLFELKMVQVQYGTENIPTATAIVLTPEGLEKTVVATGAGSVEAIFNTLEQLVPNAVHVIDYRVTSVGKGRDALGEAVVNIRYDHVSTTGRNSSQDVLEASAKAYLNAINRHLIKESLRAHPV</sequence>
<accession>B1HR98</accession>
<comment type="function">
    <text evidence="1">Catalyzes the condensation of the acetyl group of acetyl-CoA with 3-methyl-2-oxobutanoate (2-ketoisovalerate) to form 3-carboxy-3-hydroxy-4-methylpentanoate (2-isopropylmalate).</text>
</comment>
<comment type="catalytic activity">
    <reaction evidence="1">
        <text>3-methyl-2-oxobutanoate + acetyl-CoA + H2O = (2S)-2-isopropylmalate + CoA + H(+)</text>
        <dbReference type="Rhea" id="RHEA:21524"/>
        <dbReference type="ChEBI" id="CHEBI:1178"/>
        <dbReference type="ChEBI" id="CHEBI:11851"/>
        <dbReference type="ChEBI" id="CHEBI:15377"/>
        <dbReference type="ChEBI" id="CHEBI:15378"/>
        <dbReference type="ChEBI" id="CHEBI:57287"/>
        <dbReference type="ChEBI" id="CHEBI:57288"/>
        <dbReference type="EC" id="2.3.3.13"/>
    </reaction>
</comment>
<comment type="cofactor">
    <cofactor evidence="1">
        <name>Mn(2+)</name>
        <dbReference type="ChEBI" id="CHEBI:29035"/>
    </cofactor>
</comment>
<comment type="pathway">
    <text evidence="1">Amino-acid biosynthesis; L-leucine biosynthesis; L-leucine from 3-methyl-2-oxobutanoate: step 1/4.</text>
</comment>
<comment type="subunit">
    <text evidence="1">Homodimer.</text>
</comment>
<comment type="subcellular location">
    <subcellularLocation>
        <location evidence="1">Cytoplasm</location>
    </subcellularLocation>
</comment>
<comment type="similarity">
    <text evidence="1">Belongs to the alpha-IPM synthase/homocitrate synthase family. LeuA type 1 subfamily.</text>
</comment>
<organism>
    <name type="scientific">Lysinibacillus sphaericus (strain C3-41)</name>
    <dbReference type="NCBI Taxonomy" id="444177"/>
    <lineage>
        <taxon>Bacteria</taxon>
        <taxon>Bacillati</taxon>
        <taxon>Bacillota</taxon>
        <taxon>Bacilli</taxon>
        <taxon>Bacillales</taxon>
        <taxon>Bacillaceae</taxon>
        <taxon>Lysinibacillus</taxon>
    </lineage>
</organism>
<evidence type="ECO:0000255" key="1">
    <source>
        <dbReference type="HAMAP-Rule" id="MF_01025"/>
    </source>
</evidence>
<dbReference type="EC" id="2.3.3.13" evidence="1"/>
<dbReference type="EMBL" id="CP000817">
    <property type="protein sequence ID" value="ACA40878.1"/>
    <property type="molecule type" value="Genomic_DNA"/>
</dbReference>
<dbReference type="RefSeq" id="WP_012294942.1">
    <property type="nucleotide sequence ID" value="NC_010382.1"/>
</dbReference>
<dbReference type="SMR" id="B1HR98"/>
<dbReference type="EnsemblBacteria" id="ACA40878">
    <property type="protein sequence ID" value="ACA40878"/>
    <property type="gene ID" value="Bsph_3386"/>
</dbReference>
<dbReference type="KEGG" id="lsp:Bsph_3386"/>
<dbReference type="HOGENOM" id="CLU_022158_0_1_9"/>
<dbReference type="UniPathway" id="UPA00048">
    <property type="reaction ID" value="UER00070"/>
</dbReference>
<dbReference type="Proteomes" id="UP000002164">
    <property type="component" value="Chromosome"/>
</dbReference>
<dbReference type="GO" id="GO:0005737">
    <property type="term" value="C:cytoplasm"/>
    <property type="evidence" value="ECO:0007669"/>
    <property type="project" value="UniProtKB-SubCell"/>
</dbReference>
<dbReference type="GO" id="GO:0003852">
    <property type="term" value="F:2-isopropylmalate synthase activity"/>
    <property type="evidence" value="ECO:0007669"/>
    <property type="project" value="UniProtKB-UniRule"/>
</dbReference>
<dbReference type="GO" id="GO:0003985">
    <property type="term" value="F:acetyl-CoA C-acetyltransferase activity"/>
    <property type="evidence" value="ECO:0007669"/>
    <property type="project" value="UniProtKB-UniRule"/>
</dbReference>
<dbReference type="GO" id="GO:0030145">
    <property type="term" value="F:manganese ion binding"/>
    <property type="evidence" value="ECO:0007669"/>
    <property type="project" value="UniProtKB-UniRule"/>
</dbReference>
<dbReference type="GO" id="GO:0009098">
    <property type="term" value="P:L-leucine biosynthetic process"/>
    <property type="evidence" value="ECO:0007669"/>
    <property type="project" value="UniProtKB-UniRule"/>
</dbReference>
<dbReference type="CDD" id="cd07940">
    <property type="entry name" value="DRE_TIM_IPMS"/>
    <property type="match status" value="1"/>
</dbReference>
<dbReference type="FunFam" id="1.10.238.260:FF:000001">
    <property type="entry name" value="2-isopropylmalate synthase"/>
    <property type="match status" value="1"/>
</dbReference>
<dbReference type="FunFam" id="3.20.20.70:FF:000010">
    <property type="entry name" value="2-isopropylmalate synthase"/>
    <property type="match status" value="1"/>
</dbReference>
<dbReference type="Gene3D" id="1.10.238.260">
    <property type="match status" value="1"/>
</dbReference>
<dbReference type="Gene3D" id="3.30.160.270">
    <property type="match status" value="1"/>
</dbReference>
<dbReference type="Gene3D" id="3.20.20.70">
    <property type="entry name" value="Aldolase class I"/>
    <property type="match status" value="1"/>
</dbReference>
<dbReference type="HAMAP" id="MF_01025">
    <property type="entry name" value="LeuA_type1"/>
    <property type="match status" value="1"/>
</dbReference>
<dbReference type="InterPro" id="IPR050073">
    <property type="entry name" value="2-IPM_HCS-like"/>
</dbReference>
<dbReference type="InterPro" id="IPR013709">
    <property type="entry name" value="2-isopropylmalate_synth_dimer"/>
</dbReference>
<dbReference type="InterPro" id="IPR002034">
    <property type="entry name" value="AIPM/Hcit_synth_CS"/>
</dbReference>
<dbReference type="InterPro" id="IPR013785">
    <property type="entry name" value="Aldolase_TIM"/>
</dbReference>
<dbReference type="InterPro" id="IPR054691">
    <property type="entry name" value="LeuA/HCS_post-cat"/>
</dbReference>
<dbReference type="InterPro" id="IPR036230">
    <property type="entry name" value="LeuA_allosteric_dom_sf"/>
</dbReference>
<dbReference type="InterPro" id="IPR005671">
    <property type="entry name" value="LeuA_bact_synth"/>
</dbReference>
<dbReference type="InterPro" id="IPR000891">
    <property type="entry name" value="PYR_CT"/>
</dbReference>
<dbReference type="NCBIfam" id="TIGR00973">
    <property type="entry name" value="leuA_bact"/>
    <property type="match status" value="1"/>
</dbReference>
<dbReference type="NCBIfam" id="NF002086">
    <property type="entry name" value="PRK00915.1-3"/>
    <property type="match status" value="1"/>
</dbReference>
<dbReference type="NCBIfam" id="NF002088">
    <property type="entry name" value="PRK00915.1-5"/>
    <property type="match status" value="1"/>
</dbReference>
<dbReference type="PANTHER" id="PTHR10277:SF9">
    <property type="entry name" value="2-ISOPROPYLMALATE SYNTHASE 1, CHLOROPLASTIC-RELATED"/>
    <property type="match status" value="1"/>
</dbReference>
<dbReference type="PANTHER" id="PTHR10277">
    <property type="entry name" value="HOMOCITRATE SYNTHASE-RELATED"/>
    <property type="match status" value="1"/>
</dbReference>
<dbReference type="Pfam" id="PF22617">
    <property type="entry name" value="HCS_D2"/>
    <property type="match status" value="1"/>
</dbReference>
<dbReference type="Pfam" id="PF00682">
    <property type="entry name" value="HMGL-like"/>
    <property type="match status" value="1"/>
</dbReference>
<dbReference type="Pfam" id="PF08502">
    <property type="entry name" value="LeuA_dimer"/>
    <property type="match status" value="1"/>
</dbReference>
<dbReference type="SMART" id="SM00917">
    <property type="entry name" value="LeuA_dimer"/>
    <property type="match status" value="1"/>
</dbReference>
<dbReference type="SUPFAM" id="SSF110921">
    <property type="entry name" value="2-isopropylmalate synthase LeuA, allosteric (dimerisation) domain"/>
    <property type="match status" value="1"/>
</dbReference>
<dbReference type="SUPFAM" id="SSF51569">
    <property type="entry name" value="Aldolase"/>
    <property type="match status" value="1"/>
</dbReference>
<dbReference type="PROSITE" id="PS00815">
    <property type="entry name" value="AIPM_HOMOCIT_SYNTH_1"/>
    <property type="match status" value="1"/>
</dbReference>
<dbReference type="PROSITE" id="PS00816">
    <property type="entry name" value="AIPM_HOMOCIT_SYNTH_2"/>
    <property type="match status" value="1"/>
</dbReference>
<dbReference type="PROSITE" id="PS50991">
    <property type="entry name" value="PYR_CT"/>
    <property type="match status" value="1"/>
</dbReference>
<protein>
    <recommendedName>
        <fullName evidence="1">2-isopropylmalate synthase</fullName>
        <ecNumber evidence="1">2.3.3.13</ecNumber>
    </recommendedName>
    <alternativeName>
        <fullName evidence="1">Alpha-IPM synthase</fullName>
    </alternativeName>
    <alternativeName>
        <fullName evidence="1">Alpha-isopropylmalate synthase</fullName>
    </alternativeName>
</protein>
<proteinExistence type="inferred from homology"/>
<feature type="chain" id="PRO_1000149218" description="2-isopropylmalate synthase">
    <location>
        <begin position="1"/>
        <end position="511"/>
    </location>
</feature>
<feature type="domain" description="Pyruvate carboxyltransferase" evidence="1">
    <location>
        <begin position="4"/>
        <end position="266"/>
    </location>
</feature>
<feature type="region of interest" description="Regulatory domain" evidence="1">
    <location>
        <begin position="392"/>
        <end position="511"/>
    </location>
</feature>
<feature type="binding site" evidence="1">
    <location>
        <position position="13"/>
    </location>
    <ligand>
        <name>Mn(2+)</name>
        <dbReference type="ChEBI" id="CHEBI:29035"/>
    </ligand>
</feature>
<feature type="binding site" evidence="1">
    <location>
        <position position="201"/>
    </location>
    <ligand>
        <name>Mn(2+)</name>
        <dbReference type="ChEBI" id="CHEBI:29035"/>
    </ligand>
</feature>
<feature type="binding site" evidence="1">
    <location>
        <position position="203"/>
    </location>
    <ligand>
        <name>Mn(2+)</name>
        <dbReference type="ChEBI" id="CHEBI:29035"/>
    </ligand>
</feature>
<feature type="binding site" evidence="1">
    <location>
        <position position="237"/>
    </location>
    <ligand>
        <name>Mn(2+)</name>
        <dbReference type="ChEBI" id="CHEBI:29035"/>
    </ligand>
</feature>
<keyword id="KW-0028">Amino-acid biosynthesis</keyword>
<keyword id="KW-0100">Branched-chain amino acid biosynthesis</keyword>
<keyword id="KW-0963">Cytoplasm</keyword>
<keyword id="KW-0432">Leucine biosynthesis</keyword>
<keyword id="KW-0464">Manganese</keyword>
<keyword id="KW-0479">Metal-binding</keyword>
<keyword id="KW-0808">Transferase</keyword>
<gene>
    <name evidence="1" type="primary">leuA</name>
    <name type="ordered locus">Bsph_3386</name>
</gene>
<reference key="1">
    <citation type="journal article" date="2008" name="J. Bacteriol.">
        <title>Complete genome sequence of the mosquitocidal bacterium Bacillus sphaericus C3-41 and comparison with those of closely related Bacillus species.</title>
        <authorList>
            <person name="Hu X."/>
            <person name="Fan W."/>
            <person name="Han B."/>
            <person name="Liu H."/>
            <person name="Zheng D."/>
            <person name="Li Q."/>
            <person name="Dong W."/>
            <person name="Yan J."/>
            <person name="Gao M."/>
            <person name="Berry C."/>
            <person name="Yuan Z."/>
        </authorList>
    </citation>
    <scope>NUCLEOTIDE SEQUENCE [LARGE SCALE GENOMIC DNA]</scope>
    <source>
        <strain>C3-41</strain>
    </source>
</reference>